<organism>
    <name type="scientific">Dictyostelium discoideum</name>
    <name type="common">Social amoeba</name>
    <dbReference type="NCBI Taxonomy" id="44689"/>
    <lineage>
        <taxon>Eukaryota</taxon>
        <taxon>Amoebozoa</taxon>
        <taxon>Evosea</taxon>
        <taxon>Eumycetozoa</taxon>
        <taxon>Dictyostelia</taxon>
        <taxon>Dictyosteliales</taxon>
        <taxon>Dictyosteliaceae</taxon>
        <taxon>Dictyostelium</taxon>
    </lineage>
</organism>
<accession>Q54WF4</accession>
<evidence type="ECO:0000255" key="1"/>
<evidence type="ECO:0000256" key="2">
    <source>
        <dbReference type="SAM" id="MobiDB-lite"/>
    </source>
</evidence>
<dbReference type="EMBL" id="AAFI02000032">
    <property type="protein sequence ID" value="EAL67617.1"/>
    <property type="molecule type" value="Genomic_DNA"/>
</dbReference>
<dbReference type="RefSeq" id="XP_641599.1">
    <property type="nucleotide sequence ID" value="XM_636507.1"/>
</dbReference>
<dbReference type="SMR" id="Q54WF4"/>
<dbReference type="FunCoup" id="Q54WF4">
    <property type="interactions" value="877"/>
</dbReference>
<dbReference type="PaxDb" id="44689-DDB0205986"/>
<dbReference type="EnsemblProtists" id="EAL67617">
    <property type="protein sequence ID" value="EAL67617"/>
    <property type="gene ID" value="DDB_G0279685"/>
</dbReference>
<dbReference type="GeneID" id="8622174"/>
<dbReference type="KEGG" id="ddi:DDB_G0279685"/>
<dbReference type="dictyBase" id="DDB_G0279685"/>
<dbReference type="VEuPathDB" id="AmoebaDB:DDB_G0279685"/>
<dbReference type="eggNOG" id="ENOG502RIKZ">
    <property type="taxonomic scope" value="Eukaryota"/>
</dbReference>
<dbReference type="HOGENOM" id="CLU_800299_0_0_1"/>
<dbReference type="InParanoid" id="Q54WF4"/>
<dbReference type="OMA" id="TEDLRYY"/>
<dbReference type="PRO" id="PR:Q54WF4"/>
<dbReference type="Proteomes" id="UP000002195">
    <property type="component" value="Chromosome 3"/>
</dbReference>
<name>Y5986_DICDI</name>
<gene>
    <name type="ORF">DDB_G0279685</name>
</gene>
<feature type="chain" id="PRO_0000352439" description="Putative uncharacterized protein DDB_G0279685">
    <location>
        <begin position="1"/>
        <end position="347"/>
    </location>
</feature>
<feature type="region of interest" description="Disordered" evidence="2">
    <location>
        <begin position="151"/>
        <end position="203"/>
    </location>
</feature>
<feature type="coiled-coil region" evidence="1">
    <location>
        <begin position="148"/>
        <end position="201"/>
    </location>
</feature>
<feature type="coiled-coil region" evidence="1">
    <location>
        <begin position="261"/>
        <end position="298"/>
    </location>
</feature>
<feature type="compositionally biased region" description="Basic and acidic residues" evidence="2">
    <location>
        <begin position="155"/>
        <end position="167"/>
    </location>
</feature>
<feature type="compositionally biased region" description="Acidic residues" evidence="2">
    <location>
        <begin position="168"/>
        <end position="178"/>
    </location>
</feature>
<feature type="compositionally biased region" description="Basic and acidic residues" evidence="2">
    <location>
        <begin position="179"/>
        <end position="191"/>
    </location>
</feature>
<proteinExistence type="predicted"/>
<sequence>MDRMLETSETFSISGIIENEIEQRESFINDTSKIVELLFKQFNITQQQQQNNENKLINETFSMVFQLFKEMLSPLYSLVNEDMMPNIFELYQMTEDLRYYFALFNGDIKNKLKNITTTTKDLRICNNKKELIKELIKNQYDIDRKPIDQQSISNLRKEEKEKQKENENENENENENENENEKENQELDKKVNQTNDNEKDGDENENEIKDCFFLLFQLFTSIVYNLQSNCEKLLLQSIDISKNNFKRQFYNHLIKRDLNYLENLTFRLNLINDLNKKEEEKEKEKEKEKEENSFDTFSKLFLNDKQQKENTNNIINNNLLESFQIIFSNYIEKNNLNVDLILESFNN</sequence>
<reference key="1">
    <citation type="journal article" date="2005" name="Nature">
        <title>The genome of the social amoeba Dictyostelium discoideum.</title>
        <authorList>
            <person name="Eichinger L."/>
            <person name="Pachebat J.A."/>
            <person name="Gloeckner G."/>
            <person name="Rajandream M.A."/>
            <person name="Sucgang R."/>
            <person name="Berriman M."/>
            <person name="Song J."/>
            <person name="Olsen R."/>
            <person name="Szafranski K."/>
            <person name="Xu Q."/>
            <person name="Tunggal B."/>
            <person name="Kummerfeld S."/>
            <person name="Madera M."/>
            <person name="Konfortov B.A."/>
            <person name="Rivero F."/>
            <person name="Bankier A.T."/>
            <person name="Lehmann R."/>
            <person name="Hamlin N."/>
            <person name="Davies R."/>
            <person name="Gaudet P."/>
            <person name="Fey P."/>
            <person name="Pilcher K."/>
            <person name="Chen G."/>
            <person name="Saunders D."/>
            <person name="Sodergren E.J."/>
            <person name="Davis P."/>
            <person name="Kerhornou A."/>
            <person name="Nie X."/>
            <person name="Hall N."/>
            <person name="Anjard C."/>
            <person name="Hemphill L."/>
            <person name="Bason N."/>
            <person name="Farbrother P."/>
            <person name="Desany B."/>
            <person name="Just E."/>
            <person name="Morio T."/>
            <person name="Rost R."/>
            <person name="Churcher C.M."/>
            <person name="Cooper J."/>
            <person name="Haydock S."/>
            <person name="van Driessche N."/>
            <person name="Cronin A."/>
            <person name="Goodhead I."/>
            <person name="Muzny D.M."/>
            <person name="Mourier T."/>
            <person name="Pain A."/>
            <person name="Lu M."/>
            <person name="Harper D."/>
            <person name="Lindsay R."/>
            <person name="Hauser H."/>
            <person name="James K.D."/>
            <person name="Quiles M."/>
            <person name="Madan Babu M."/>
            <person name="Saito T."/>
            <person name="Buchrieser C."/>
            <person name="Wardroper A."/>
            <person name="Felder M."/>
            <person name="Thangavelu M."/>
            <person name="Johnson D."/>
            <person name="Knights A."/>
            <person name="Loulseged H."/>
            <person name="Mungall K.L."/>
            <person name="Oliver K."/>
            <person name="Price C."/>
            <person name="Quail M.A."/>
            <person name="Urushihara H."/>
            <person name="Hernandez J."/>
            <person name="Rabbinowitsch E."/>
            <person name="Steffen D."/>
            <person name="Sanders M."/>
            <person name="Ma J."/>
            <person name="Kohara Y."/>
            <person name="Sharp S."/>
            <person name="Simmonds M.N."/>
            <person name="Spiegler S."/>
            <person name="Tivey A."/>
            <person name="Sugano S."/>
            <person name="White B."/>
            <person name="Walker D."/>
            <person name="Woodward J.R."/>
            <person name="Winckler T."/>
            <person name="Tanaka Y."/>
            <person name="Shaulsky G."/>
            <person name="Schleicher M."/>
            <person name="Weinstock G.M."/>
            <person name="Rosenthal A."/>
            <person name="Cox E.C."/>
            <person name="Chisholm R.L."/>
            <person name="Gibbs R.A."/>
            <person name="Loomis W.F."/>
            <person name="Platzer M."/>
            <person name="Kay R.R."/>
            <person name="Williams J.G."/>
            <person name="Dear P.H."/>
            <person name="Noegel A.A."/>
            <person name="Barrell B.G."/>
            <person name="Kuspa A."/>
        </authorList>
    </citation>
    <scope>NUCLEOTIDE SEQUENCE [LARGE SCALE GENOMIC DNA]</scope>
    <source>
        <strain>AX4</strain>
    </source>
</reference>
<keyword id="KW-0175">Coiled coil</keyword>
<keyword id="KW-1185">Reference proteome</keyword>
<protein>
    <recommendedName>
        <fullName>Putative uncharacterized protein DDB_G0279685</fullName>
    </recommendedName>
</protein>